<feature type="chain" id="PRO_1000006880" description="Phenylalanine--tRNA ligase alpha subunit">
    <location>
        <begin position="1"/>
        <end position="360"/>
    </location>
</feature>
<feature type="binding site" evidence="1">
    <location>
        <position position="260"/>
    </location>
    <ligand>
        <name>Mg(2+)</name>
        <dbReference type="ChEBI" id="CHEBI:18420"/>
        <note>shared with beta subunit</note>
    </ligand>
</feature>
<keyword id="KW-0030">Aminoacyl-tRNA synthetase</keyword>
<keyword id="KW-0067">ATP-binding</keyword>
<keyword id="KW-0963">Cytoplasm</keyword>
<keyword id="KW-0436">Ligase</keyword>
<keyword id="KW-0460">Magnesium</keyword>
<keyword id="KW-0479">Metal-binding</keyword>
<keyword id="KW-0547">Nucleotide-binding</keyword>
<keyword id="KW-0648">Protein biosynthesis</keyword>
<keyword id="KW-1185">Reference proteome</keyword>
<reference key="1">
    <citation type="journal article" date="2006" name="Proc. Natl. Acad. Sci. U.S.A.">
        <title>The partitioned Rhizobium etli genome: genetic and metabolic redundancy in seven interacting replicons.</title>
        <authorList>
            <person name="Gonzalez V."/>
            <person name="Santamaria R.I."/>
            <person name="Bustos P."/>
            <person name="Hernandez-Gonzalez I."/>
            <person name="Medrano-Soto A."/>
            <person name="Moreno-Hagelsieb G."/>
            <person name="Janga S.C."/>
            <person name="Ramirez M.A."/>
            <person name="Jimenez-Jacinto V."/>
            <person name="Collado-Vides J."/>
            <person name="Davila G."/>
        </authorList>
    </citation>
    <scope>NUCLEOTIDE SEQUENCE [LARGE SCALE GENOMIC DNA]</scope>
    <source>
        <strain>ATCC 51251 / DSM 11541 / JCM 21823 / NBRC 15573 / CFN 42</strain>
    </source>
</reference>
<evidence type="ECO:0000255" key="1">
    <source>
        <dbReference type="HAMAP-Rule" id="MF_00281"/>
    </source>
</evidence>
<sequence length="360" mass="40158">MSDIDQLNSSLLAEIAAANDEAALEAVRVSALGKKGSVSELLKTLGSMTPEERQTRGAAINALKNAVTDAVAERRSVLKVAAVNARLKAETVDVSLPVRSSPAERGRIHPISQIVDEITAIFADMGFSIAEGPDIETDYYNFTALNFPEGHPAREMHDTFFFNPDENGERKVLRTHTSPVQVRTMEAQQPPIRIIIPGKTYRQDSDATHSPMFHQVEGLVIDKKANVANIRWVLEEFCKTFFEVDSVTMRFRPSFFPFTEPSFEVDIQCDRSGPIVKFGEGTDWMEILGCGMVHPNVLRYGGLDPDEYQGFAWGMGLDRIAMLKYGMPDLRDFFNADVRWMTHYGFRPLDMPTLFGGLSA</sequence>
<dbReference type="EC" id="6.1.1.20" evidence="1"/>
<dbReference type="EMBL" id="CP000133">
    <property type="protein sequence ID" value="ABC89086.1"/>
    <property type="molecule type" value="Genomic_DNA"/>
</dbReference>
<dbReference type="RefSeq" id="WP_011423648.1">
    <property type="nucleotide sequence ID" value="NC_007761.1"/>
</dbReference>
<dbReference type="SMR" id="Q2KDK0"/>
<dbReference type="KEGG" id="ret:RHE_CH00263"/>
<dbReference type="eggNOG" id="COG0016">
    <property type="taxonomic scope" value="Bacteria"/>
</dbReference>
<dbReference type="HOGENOM" id="CLU_025086_0_1_5"/>
<dbReference type="OrthoDB" id="9800719at2"/>
<dbReference type="Proteomes" id="UP000001936">
    <property type="component" value="Chromosome"/>
</dbReference>
<dbReference type="GO" id="GO:0005737">
    <property type="term" value="C:cytoplasm"/>
    <property type="evidence" value="ECO:0007669"/>
    <property type="project" value="UniProtKB-SubCell"/>
</dbReference>
<dbReference type="GO" id="GO:0005524">
    <property type="term" value="F:ATP binding"/>
    <property type="evidence" value="ECO:0007669"/>
    <property type="project" value="UniProtKB-UniRule"/>
</dbReference>
<dbReference type="GO" id="GO:0000287">
    <property type="term" value="F:magnesium ion binding"/>
    <property type="evidence" value="ECO:0007669"/>
    <property type="project" value="UniProtKB-UniRule"/>
</dbReference>
<dbReference type="GO" id="GO:0004826">
    <property type="term" value="F:phenylalanine-tRNA ligase activity"/>
    <property type="evidence" value="ECO:0007669"/>
    <property type="project" value="UniProtKB-UniRule"/>
</dbReference>
<dbReference type="GO" id="GO:0000049">
    <property type="term" value="F:tRNA binding"/>
    <property type="evidence" value="ECO:0007669"/>
    <property type="project" value="InterPro"/>
</dbReference>
<dbReference type="GO" id="GO:0006432">
    <property type="term" value="P:phenylalanyl-tRNA aminoacylation"/>
    <property type="evidence" value="ECO:0007669"/>
    <property type="project" value="UniProtKB-UniRule"/>
</dbReference>
<dbReference type="CDD" id="cd00496">
    <property type="entry name" value="PheRS_alpha_core"/>
    <property type="match status" value="1"/>
</dbReference>
<dbReference type="FunFam" id="3.30.930.10:FF:000003">
    <property type="entry name" value="Phenylalanine--tRNA ligase alpha subunit"/>
    <property type="match status" value="1"/>
</dbReference>
<dbReference type="Gene3D" id="3.30.930.10">
    <property type="entry name" value="Bira Bifunctional Protein, Domain 2"/>
    <property type="match status" value="1"/>
</dbReference>
<dbReference type="HAMAP" id="MF_00281">
    <property type="entry name" value="Phe_tRNA_synth_alpha1"/>
    <property type="match status" value="1"/>
</dbReference>
<dbReference type="InterPro" id="IPR006195">
    <property type="entry name" value="aa-tRNA-synth_II"/>
</dbReference>
<dbReference type="InterPro" id="IPR045864">
    <property type="entry name" value="aa-tRNA-synth_II/BPL/LPL"/>
</dbReference>
<dbReference type="InterPro" id="IPR004529">
    <property type="entry name" value="Phe-tRNA-synth_IIc_asu"/>
</dbReference>
<dbReference type="InterPro" id="IPR004188">
    <property type="entry name" value="Phe-tRNA_ligase_II_N"/>
</dbReference>
<dbReference type="InterPro" id="IPR022911">
    <property type="entry name" value="Phe_tRNA_ligase_alpha1_bac"/>
</dbReference>
<dbReference type="InterPro" id="IPR002319">
    <property type="entry name" value="Phenylalanyl-tRNA_Synthase"/>
</dbReference>
<dbReference type="InterPro" id="IPR010978">
    <property type="entry name" value="tRNA-bd_arm"/>
</dbReference>
<dbReference type="NCBIfam" id="TIGR00468">
    <property type="entry name" value="pheS"/>
    <property type="match status" value="1"/>
</dbReference>
<dbReference type="PANTHER" id="PTHR11538:SF41">
    <property type="entry name" value="PHENYLALANINE--TRNA LIGASE, MITOCHONDRIAL"/>
    <property type="match status" value="1"/>
</dbReference>
<dbReference type="PANTHER" id="PTHR11538">
    <property type="entry name" value="PHENYLALANYL-TRNA SYNTHETASE"/>
    <property type="match status" value="1"/>
</dbReference>
<dbReference type="Pfam" id="PF02912">
    <property type="entry name" value="Phe_tRNA-synt_N"/>
    <property type="match status" value="1"/>
</dbReference>
<dbReference type="Pfam" id="PF01409">
    <property type="entry name" value="tRNA-synt_2d"/>
    <property type="match status" value="1"/>
</dbReference>
<dbReference type="SUPFAM" id="SSF55681">
    <property type="entry name" value="Class II aaRS and biotin synthetases"/>
    <property type="match status" value="1"/>
</dbReference>
<dbReference type="SUPFAM" id="SSF46589">
    <property type="entry name" value="tRNA-binding arm"/>
    <property type="match status" value="1"/>
</dbReference>
<dbReference type="PROSITE" id="PS50862">
    <property type="entry name" value="AA_TRNA_LIGASE_II"/>
    <property type="match status" value="1"/>
</dbReference>
<organism>
    <name type="scientific">Rhizobium etli (strain ATCC 51251 / DSM 11541 / JCM 21823 / NBRC 15573 / CFN 42)</name>
    <dbReference type="NCBI Taxonomy" id="347834"/>
    <lineage>
        <taxon>Bacteria</taxon>
        <taxon>Pseudomonadati</taxon>
        <taxon>Pseudomonadota</taxon>
        <taxon>Alphaproteobacteria</taxon>
        <taxon>Hyphomicrobiales</taxon>
        <taxon>Rhizobiaceae</taxon>
        <taxon>Rhizobium/Agrobacterium group</taxon>
        <taxon>Rhizobium</taxon>
    </lineage>
</organism>
<gene>
    <name evidence="1" type="primary">pheS</name>
    <name type="ordered locus">RHE_CH00263</name>
</gene>
<protein>
    <recommendedName>
        <fullName evidence="1">Phenylalanine--tRNA ligase alpha subunit</fullName>
        <ecNumber evidence="1">6.1.1.20</ecNumber>
    </recommendedName>
    <alternativeName>
        <fullName evidence="1">Phenylalanyl-tRNA synthetase alpha subunit</fullName>
        <shortName evidence="1">PheRS</shortName>
    </alternativeName>
</protein>
<accession>Q2KDK0</accession>
<proteinExistence type="inferred from homology"/>
<name>SYFA_RHIEC</name>
<comment type="catalytic activity">
    <reaction evidence="1">
        <text>tRNA(Phe) + L-phenylalanine + ATP = L-phenylalanyl-tRNA(Phe) + AMP + diphosphate + H(+)</text>
        <dbReference type="Rhea" id="RHEA:19413"/>
        <dbReference type="Rhea" id="RHEA-COMP:9668"/>
        <dbReference type="Rhea" id="RHEA-COMP:9699"/>
        <dbReference type="ChEBI" id="CHEBI:15378"/>
        <dbReference type="ChEBI" id="CHEBI:30616"/>
        <dbReference type="ChEBI" id="CHEBI:33019"/>
        <dbReference type="ChEBI" id="CHEBI:58095"/>
        <dbReference type="ChEBI" id="CHEBI:78442"/>
        <dbReference type="ChEBI" id="CHEBI:78531"/>
        <dbReference type="ChEBI" id="CHEBI:456215"/>
        <dbReference type="EC" id="6.1.1.20"/>
    </reaction>
</comment>
<comment type="cofactor">
    <cofactor evidence="1">
        <name>Mg(2+)</name>
        <dbReference type="ChEBI" id="CHEBI:18420"/>
    </cofactor>
    <text evidence="1">Binds 2 magnesium ions per tetramer.</text>
</comment>
<comment type="subunit">
    <text evidence="1">Tetramer of two alpha and two beta subunits.</text>
</comment>
<comment type="subcellular location">
    <subcellularLocation>
        <location evidence="1">Cytoplasm</location>
    </subcellularLocation>
</comment>
<comment type="similarity">
    <text evidence="1">Belongs to the class-II aminoacyl-tRNA synthetase family. Phe-tRNA synthetase alpha subunit type 1 subfamily.</text>
</comment>